<feature type="chain" id="PRO_0000251734" description="Methionine synthase">
    <location>
        <begin position="1"/>
        <end position="1265"/>
    </location>
</feature>
<feature type="domain" description="Hcy-binding" evidence="4">
    <location>
        <begin position="19"/>
        <end position="338"/>
    </location>
</feature>
<feature type="domain" description="Pterin-binding" evidence="5">
    <location>
        <begin position="371"/>
        <end position="632"/>
    </location>
</feature>
<feature type="domain" description="B12-binding N-terminal" evidence="8">
    <location>
        <begin position="662"/>
        <end position="759"/>
    </location>
</feature>
<feature type="domain" description="B12-binding" evidence="7">
    <location>
        <begin position="772"/>
        <end position="907"/>
    </location>
</feature>
<feature type="domain" description="AdoMet activation" evidence="6">
    <location>
        <begin position="923"/>
        <end position="1265"/>
    </location>
</feature>
<feature type="binding site" evidence="4">
    <location>
        <position position="260"/>
    </location>
    <ligand>
        <name>Zn(2+)</name>
        <dbReference type="ChEBI" id="CHEBI:29105"/>
    </ligand>
</feature>
<feature type="binding site" evidence="4">
    <location>
        <position position="323"/>
    </location>
    <ligand>
        <name>Zn(2+)</name>
        <dbReference type="ChEBI" id="CHEBI:29105"/>
    </ligand>
</feature>
<feature type="binding site" evidence="4">
    <location>
        <position position="324"/>
    </location>
    <ligand>
        <name>Zn(2+)</name>
        <dbReference type="ChEBI" id="CHEBI:29105"/>
    </ligand>
</feature>
<feature type="binding site" evidence="2">
    <location>
        <begin position="382"/>
        <end position="384"/>
    </location>
    <ligand>
        <name>(6S)-5,6,7,8-tetrahydrofolate</name>
        <dbReference type="ChEBI" id="CHEBI:57453"/>
    </ligand>
</feature>
<feature type="binding site" evidence="2">
    <location>
        <position position="449"/>
    </location>
    <ligand>
        <name>(6S)-5,6,7,8-tetrahydrofolate</name>
        <dbReference type="ChEBI" id="CHEBI:57453"/>
    </ligand>
</feature>
<feature type="binding site" evidence="2">
    <location>
        <position position="470"/>
    </location>
    <ligand>
        <name>(6S)-5,6,7,8-tetrahydrofolate</name>
        <dbReference type="ChEBI" id="CHEBI:57453"/>
    </ligand>
</feature>
<feature type="binding site" evidence="2">
    <location>
        <position position="537"/>
    </location>
    <ligand>
        <name>(6S)-5,6,7,8-tetrahydrofolate</name>
        <dbReference type="ChEBI" id="CHEBI:57453"/>
    </ligand>
</feature>
<feature type="binding site" evidence="2">
    <location>
        <position position="579"/>
    </location>
    <ligand>
        <name>(6S)-5,6,7,8-tetrahydrofolate</name>
        <dbReference type="ChEBI" id="CHEBI:57453"/>
    </ligand>
</feature>
<feature type="binding site" evidence="2">
    <location>
        <position position="585"/>
    </location>
    <ligand>
        <name>(6S)-5,6,7,8-tetrahydrofolate</name>
        <dbReference type="ChEBI" id="CHEBI:57453"/>
    </ligand>
</feature>
<feature type="binding site" evidence="2">
    <location>
        <position position="591"/>
    </location>
    <ligand>
        <name>(6S)-5,6,7,8-tetrahydrofolate</name>
        <dbReference type="ChEBI" id="CHEBI:57453"/>
    </ligand>
</feature>
<feature type="binding site" evidence="1">
    <location>
        <position position="709"/>
    </location>
    <ligand>
        <name>methylcob(III)alamin</name>
        <dbReference type="ChEBI" id="CHEBI:28115"/>
    </ligand>
</feature>
<feature type="binding site" evidence="1">
    <location>
        <begin position="782"/>
        <end position="786"/>
    </location>
    <ligand>
        <name>methylcob(III)alamin</name>
        <dbReference type="ChEBI" id="CHEBI:28115"/>
    </ligand>
</feature>
<feature type="binding site" description="axial binding residue" evidence="1">
    <location>
        <position position="785"/>
    </location>
    <ligand>
        <name>methylcob(III)alamin</name>
        <dbReference type="ChEBI" id="CHEBI:28115"/>
    </ligand>
    <ligandPart>
        <name>Co</name>
        <dbReference type="ChEBI" id="CHEBI:27638"/>
    </ligandPart>
</feature>
<feature type="binding site" evidence="1">
    <location>
        <position position="830"/>
    </location>
    <ligand>
        <name>methylcob(III)alamin</name>
        <dbReference type="ChEBI" id="CHEBI:28115"/>
    </ligand>
</feature>
<feature type="binding site" evidence="1">
    <location>
        <position position="834"/>
    </location>
    <ligand>
        <name>methylcob(III)alamin</name>
        <dbReference type="ChEBI" id="CHEBI:28115"/>
    </ligand>
</feature>
<feature type="binding site" evidence="1">
    <location>
        <position position="886"/>
    </location>
    <ligand>
        <name>methylcob(III)alamin</name>
        <dbReference type="ChEBI" id="CHEBI:28115"/>
    </ligand>
</feature>
<feature type="binding site" evidence="1">
    <location>
        <position position="974"/>
    </location>
    <ligand>
        <name>S-adenosyl-L-methionine</name>
        <dbReference type="ChEBI" id="CHEBI:59789"/>
    </ligand>
</feature>
<feature type="binding site" evidence="1">
    <location>
        <position position="1172"/>
    </location>
    <ligand>
        <name>S-adenosyl-L-methionine</name>
        <dbReference type="ChEBI" id="CHEBI:59789"/>
    </ligand>
</feature>
<feature type="binding site" evidence="1">
    <location>
        <begin position="1227"/>
        <end position="1228"/>
    </location>
    <ligand>
        <name>S-adenosyl-L-methionine</name>
        <dbReference type="ChEBI" id="CHEBI:59789"/>
    </ligand>
</feature>
<feature type="modified residue" description="Phosphothreonine" evidence="3">
    <location>
        <position position="1264"/>
    </location>
</feature>
<comment type="function">
    <text evidence="2">Catalyzes the transfer of a methyl group from methylcob(III)alamin (MeCbl) to homocysteine, yielding enzyme-bound cob(I)alamin and methionine in the cytosol. MeCbl is an active form of cobalamin (vitamin B12) used as a cofactor for methionine biosynthesis. Cob(I)alamin form is regenerated to MeCbl by a transfer of a methyl group from 5-methyltetrahydrofolate. The processing of cobalamin in the cytosol occurs in a multiprotein complex composed of at least MMACHC, MMADHC, MTRR (methionine synthase reductase) and MTR which may contribute to shuttle safely and efficiently cobalamin towards MTR in order to produce methionine.</text>
</comment>
<comment type="catalytic activity">
    <reaction evidence="3">
        <text>(6S)-5-methyl-5,6,7,8-tetrahydrofolate + L-homocysteine = (6S)-5,6,7,8-tetrahydrofolate + L-methionine</text>
        <dbReference type="Rhea" id="RHEA:11172"/>
        <dbReference type="ChEBI" id="CHEBI:18608"/>
        <dbReference type="ChEBI" id="CHEBI:57453"/>
        <dbReference type="ChEBI" id="CHEBI:57844"/>
        <dbReference type="ChEBI" id="CHEBI:58199"/>
        <dbReference type="EC" id="2.1.1.13"/>
    </reaction>
    <physiologicalReaction direction="left-to-right" evidence="3">
        <dbReference type="Rhea" id="RHEA:11173"/>
    </physiologicalReaction>
</comment>
<comment type="cofactor">
    <cofactor evidence="1">
        <name>methylcob(III)alamin</name>
        <dbReference type="ChEBI" id="CHEBI:28115"/>
    </cofactor>
</comment>
<comment type="cofactor">
    <cofactor evidence="1">
        <name>Zn(2+)</name>
        <dbReference type="ChEBI" id="CHEBI:29105"/>
    </cofactor>
    <text evidence="1">Binds 1 zinc ion per subunit.</text>
</comment>
<comment type="pathway">
    <text evidence="2">Amino-acid biosynthesis; L-methionine biosynthesis via de novo pathway; L-methionine from L-homocysteine (MetH route): step 1/1.</text>
</comment>
<comment type="subunit">
    <text evidence="2">Monomer. Dimer. Forms a multiprotein complex with MMACHC, MMADHC and MTRR.</text>
</comment>
<comment type="subcellular location">
    <subcellularLocation>
        <location evidence="2">Cytoplasm</location>
    </subcellularLocation>
</comment>
<comment type="domain">
    <text evidence="1">Modular enzyme with four functionally distinct domains. The isolated Hcy-binding domain catalyzes methyl transfer from free methylcobalamin to homocysteine. The Hcy-binding domain in association with the pterin-binding domain catalyzes the methylation of cob(I)alamin by methyltetrahydrofolate and the methylation of homocysteine. The B12-binding domain binds the cofactor. The AdoMet activation domain binds S-adenosyl-L-methionine. Under aerobic conditions cob(I)alamin can be converted to inactive cob(II)alamin. Reductive methylation by S-adenosyl-L-methionine and flavodoxin regenerates methylcobalamin (By similarity).</text>
</comment>
<comment type="similarity">
    <text evidence="9">Belongs to the vitamin-B12 dependent methionine synthase family.</text>
</comment>
<reference key="1">
    <citation type="submission" date="2005-06" db="EMBL/GenBank/DDBJ databases">
        <title>Interactions of folic acid-vitamin B12-methionine: effects on liver metabolism and production of dairy cows.</title>
        <authorList>
            <person name="Palin M.-F."/>
            <person name="Beaudry D."/>
            <person name="Charest R."/>
            <person name="Girard C."/>
        </authorList>
    </citation>
    <scope>NUCLEOTIDE SEQUENCE [MRNA]</scope>
    <source>
        <tissue>Liver</tissue>
    </source>
</reference>
<gene>
    <name type="primary">MTR</name>
</gene>
<sequence length="1265" mass="140478">MAPTLQDLTPSAGMKKTLQDEIEAILQERIMVLDGGMGTMIQRHKLSEEDFRGQEFKDHARPLKGNNDILSITQPNVIYQIHKEYLLAGADIIETNTFSSTSIAQADYGLEHLAYRMNMCSAGVARKAAEDISLQTGIKRYVAGALGPTNKTLSVSPSVERPDYRNITFDELVEAYKEQAKGLLDGGVDILLIETIFDTANAKAALFAVQKLFEEEYVPRPVFISGTIVDKSGRTLSGQTGEAFVISVSHADPLCIGLNCALGAAEMRPFIETIGKCTTAYVLCYPNAGLPNTFGDYDETPHVMAMHLKDFAVDGLVNIVGGCCGTTPDHIREIAEAVKNCKPRVPPATVFEGHMLLSGLEPFRIGPYTNFVNIGERCNVAGSRRFAKLIMAGNYEEALSVAKMQVEMGAQVLDINMDDGMLDGPSAMTRFCNFIASEPDIAKVPLCIDSSNFAVIEAGLKCCQGKCIVNSISLKEGEDDFLEKARKIKKFGAAVVVMAFDEEGQATETDPKIRVCTRAYHLLLKKLGFNPNDIIFDPNILTIGTGMEEHNLYAVNFINATKVIKETLPGAKVSGGLSNLSFSFRGMEAIREAMHGVFLYHAIKFGMDMGIVNAGSLPVYDDIHKELLQLCEDLIWNRDPEATEKLLHYAQTQGKGGKKVIQTDEWRNGPLEERLEYALVKGIEKYIIEDTEEARLNQEKYPRPLNIIEGPLMNGMKIVGDLFGAGKMFLPQVIKSARVMKKAVGHLIPFMEKEREETKVLTGKIEDEDPYQGTIVLATVKGDVHDIGKNIVGVVLGCNNFRVIDLGVMTPCDKILKAALDHKADIIGLSGLITPSLDEMIFVAKEMERLAIKIPLLIGGATTSRTHTAVKIAPRYSAPVIHVLDASKSVVVCSQLLDENLKDEYFEEILEEYEDIRQDHYESLKERRYLTLRQARENGFHIDWLSEPPPVKPTFLGTRVFEDYDLQKLVDYIDWKPFFDVWQLRGKYPNRGFPKIFDDKTVGEEAKKVYDDAQNMLQALISQKKLQARGVVGFWPAQSIQDDIHLYAEGAVPQASEPIATFYGLRQQAEKDSASSDPYLCLSDFIAPLHSGIPDYLGLFAVACFGVEELSKAYEEECDDYSSIMVKALGDRLAEAFAEELHERARRELWGYCSGEQLAVADLRRLRYEGIRPAPGYPSQPDHTEKLTVWRLADVEQRTGIRLTESLAMAPASAVSGLYFSNLKSKYFAVGKISKDQIEDYASRKNMSVAEVEKWLGPILGYDTD</sequence>
<protein>
    <recommendedName>
        <fullName>Methionine synthase</fullName>
        <shortName>MS</shortName>
        <ecNumber evidence="3">2.1.1.13</ecNumber>
    </recommendedName>
    <alternativeName>
        <fullName>5-methyltetrahydrofolate--homocysteine methyltransferase</fullName>
    </alternativeName>
    <alternativeName>
        <fullName>Cobalamin-dependent methionine synthase</fullName>
    </alternativeName>
    <alternativeName>
        <fullName>Vitamin-B12 dependent methionine synthase</fullName>
    </alternativeName>
</protein>
<name>METH_BOVIN</name>
<organism>
    <name type="scientific">Bos taurus</name>
    <name type="common">Bovine</name>
    <dbReference type="NCBI Taxonomy" id="9913"/>
    <lineage>
        <taxon>Eukaryota</taxon>
        <taxon>Metazoa</taxon>
        <taxon>Chordata</taxon>
        <taxon>Craniata</taxon>
        <taxon>Vertebrata</taxon>
        <taxon>Euteleostomi</taxon>
        <taxon>Mammalia</taxon>
        <taxon>Eutheria</taxon>
        <taxon>Laurasiatheria</taxon>
        <taxon>Artiodactyla</taxon>
        <taxon>Ruminantia</taxon>
        <taxon>Pecora</taxon>
        <taxon>Bovidae</taxon>
        <taxon>Bovinae</taxon>
        <taxon>Bos</taxon>
    </lineage>
</organism>
<keyword id="KW-0028">Amino-acid biosynthesis</keyword>
<keyword id="KW-0846">Cobalamin</keyword>
<keyword id="KW-0170">Cobalt</keyword>
<keyword id="KW-0963">Cytoplasm</keyword>
<keyword id="KW-0479">Metal-binding</keyword>
<keyword id="KW-0486">Methionine biosynthesis</keyword>
<keyword id="KW-0489">Methyltransferase</keyword>
<keyword id="KW-0597">Phosphoprotein</keyword>
<keyword id="KW-1185">Reference proteome</keyword>
<keyword id="KW-0677">Repeat</keyword>
<keyword id="KW-0949">S-adenosyl-L-methionine</keyword>
<keyword id="KW-0808">Transferase</keyword>
<keyword id="KW-0862">Zinc</keyword>
<dbReference type="EC" id="2.1.1.13" evidence="3"/>
<dbReference type="EMBL" id="DQ084519">
    <property type="protein sequence ID" value="AAY86762.1"/>
    <property type="molecule type" value="mRNA"/>
</dbReference>
<dbReference type="RefSeq" id="NP_001025469.1">
    <property type="nucleotide sequence ID" value="NM_001030298.1"/>
</dbReference>
<dbReference type="SMR" id="Q4JIJ3"/>
<dbReference type="FunCoup" id="Q4JIJ3">
    <property type="interactions" value="654"/>
</dbReference>
<dbReference type="STRING" id="9913.ENSBTAP00000067894"/>
<dbReference type="PaxDb" id="9913-ENSBTAP00000016262"/>
<dbReference type="GeneID" id="280869"/>
<dbReference type="KEGG" id="bta:280869"/>
<dbReference type="CTD" id="4548"/>
<dbReference type="eggNOG" id="KOG1579">
    <property type="taxonomic scope" value="Eukaryota"/>
</dbReference>
<dbReference type="InParanoid" id="Q4JIJ3"/>
<dbReference type="OrthoDB" id="261426at2759"/>
<dbReference type="UniPathway" id="UPA00051">
    <property type="reaction ID" value="UER00081"/>
</dbReference>
<dbReference type="Proteomes" id="UP000009136">
    <property type="component" value="Unplaced"/>
</dbReference>
<dbReference type="GO" id="GO:0005829">
    <property type="term" value="C:cytosol"/>
    <property type="evidence" value="ECO:0000318"/>
    <property type="project" value="GO_Central"/>
</dbReference>
<dbReference type="GO" id="GO:0031419">
    <property type="term" value="F:cobalamin binding"/>
    <property type="evidence" value="ECO:0007669"/>
    <property type="project" value="UniProtKB-KW"/>
</dbReference>
<dbReference type="GO" id="GO:0008705">
    <property type="term" value="F:methionine synthase activity"/>
    <property type="evidence" value="ECO:0000318"/>
    <property type="project" value="GO_Central"/>
</dbReference>
<dbReference type="GO" id="GO:0008270">
    <property type="term" value="F:zinc ion binding"/>
    <property type="evidence" value="ECO:0007669"/>
    <property type="project" value="InterPro"/>
</dbReference>
<dbReference type="GO" id="GO:0050667">
    <property type="term" value="P:homocysteine metabolic process"/>
    <property type="evidence" value="ECO:0000318"/>
    <property type="project" value="GO_Central"/>
</dbReference>
<dbReference type="GO" id="GO:0009086">
    <property type="term" value="P:methionine biosynthetic process"/>
    <property type="evidence" value="ECO:0000318"/>
    <property type="project" value="GO_Central"/>
</dbReference>
<dbReference type="GO" id="GO:0032259">
    <property type="term" value="P:methylation"/>
    <property type="evidence" value="ECO:0007669"/>
    <property type="project" value="UniProtKB-KW"/>
</dbReference>
<dbReference type="GO" id="GO:0046653">
    <property type="term" value="P:tetrahydrofolate metabolic process"/>
    <property type="evidence" value="ECO:0000318"/>
    <property type="project" value="GO_Central"/>
</dbReference>
<dbReference type="CDD" id="cd02069">
    <property type="entry name" value="methionine_synthase_B12_BD"/>
    <property type="match status" value="1"/>
</dbReference>
<dbReference type="CDD" id="cd00740">
    <property type="entry name" value="MeTr"/>
    <property type="match status" value="1"/>
</dbReference>
<dbReference type="FunFam" id="1.10.1240.10:FF:000001">
    <property type="entry name" value="Methionine synthase"/>
    <property type="match status" value="1"/>
</dbReference>
<dbReference type="FunFam" id="1.10.288.10:FF:000001">
    <property type="entry name" value="Methionine synthase"/>
    <property type="match status" value="1"/>
</dbReference>
<dbReference type="FunFam" id="3.20.20.20:FF:000002">
    <property type="entry name" value="Methionine synthase"/>
    <property type="match status" value="1"/>
</dbReference>
<dbReference type="FunFam" id="3.20.20.330:FF:000001">
    <property type="entry name" value="Methionine synthase"/>
    <property type="match status" value="1"/>
</dbReference>
<dbReference type="FunFam" id="3.40.50.280:FF:000001">
    <property type="entry name" value="Methionine synthase"/>
    <property type="match status" value="1"/>
</dbReference>
<dbReference type="Gene3D" id="3.40.50.280">
    <property type="entry name" value="Cobalamin-binding domain"/>
    <property type="match status" value="1"/>
</dbReference>
<dbReference type="Gene3D" id="1.10.288.10">
    <property type="entry name" value="Cobalamin-dependent Methionine Synthase, domain 2"/>
    <property type="match status" value="1"/>
</dbReference>
<dbReference type="Gene3D" id="3.20.20.20">
    <property type="entry name" value="Dihydropteroate synthase-like"/>
    <property type="match status" value="1"/>
</dbReference>
<dbReference type="Gene3D" id="3.20.20.330">
    <property type="entry name" value="Homocysteine-binding-like domain"/>
    <property type="match status" value="1"/>
</dbReference>
<dbReference type="Gene3D" id="1.10.1240.10">
    <property type="entry name" value="Methionine synthase domain"/>
    <property type="match status" value="1"/>
</dbReference>
<dbReference type="Gene3D" id="3.10.196.10">
    <property type="entry name" value="Vitamin B12-dependent methionine synthase, activation domain"/>
    <property type="match status" value="1"/>
</dbReference>
<dbReference type="InterPro" id="IPR003759">
    <property type="entry name" value="Cbl-bd_cap"/>
</dbReference>
<dbReference type="InterPro" id="IPR006158">
    <property type="entry name" value="Cobalamin-bd"/>
</dbReference>
<dbReference type="InterPro" id="IPR036724">
    <property type="entry name" value="Cobalamin-bd_sf"/>
</dbReference>
<dbReference type="InterPro" id="IPR011005">
    <property type="entry name" value="Dihydropteroate_synth-like_sf"/>
</dbReference>
<dbReference type="InterPro" id="IPR003726">
    <property type="entry name" value="HCY_dom"/>
</dbReference>
<dbReference type="InterPro" id="IPR036589">
    <property type="entry name" value="HCY_dom_sf"/>
</dbReference>
<dbReference type="InterPro" id="IPR050554">
    <property type="entry name" value="Met_Synthase/Corrinoid"/>
</dbReference>
<dbReference type="InterPro" id="IPR033706">
    <property type="entry name" value="Met_synthase_B12-bd"/>
</dbReference>
<dbReference type="InterPro" id="IPR011822">
    <property type="entry name" value="MetH"/>
</dbReference>
<dbReference type="InterPro" id="IPR036594">
    <property type="entry name" value="Meth_synthase_dom"/>
</dbReference>
<dbReference type="InterPro" id="IPR000489">
    <property type="entry name" value="Pterin-binding_dom"/>
</dbReference>
<dbReference type="InterPro" id="IPR004223">
    <property type="entry name" value="VitB12-dep_Met_synth_activ_dom"/>
</dbReference>
<dbReference type="InterPro" id="IPR037010">
    <property type="entry name" value="VitB12-dep_Met_synth_activ_sf"/>
</dbReference>
<dbReference type="NCBIfam" id="TIGR02082">
    <property type="entry name" value="metH"/>
    <property type="match status" value="1"/>
</dbReference>
<dbReference type="NCBIfam" id="NF007024">
    <property type="entry name" value="PRK09490.1"/>
    <property type="match status" value="1"/>
</dbReference>
<dbReference type="PANTHER" id="PTHR45833">
    <property type="entry name" value="METHIONINE SYNTHASE"/>
    <property type="match status" value="1"/>
</dbReference>
<dbReference type="PANTHER" id="PTHR45833:SF1">
    <property type="entry name" value="METHIONINE SYNTHASE"/>
    <property type="match status" value="1"/>
</dbReference>
<dbReference type="Pfam" id="PF02310">
    <property type="entry name" value="B12-binding"/>
    <property type="match status" value="1"/>
</dbReference>
<dbReference type="Pfam" id="PF02607">
    <property type="entry name" value="B12-binding_2"/>
    <property type="match status" value="1"/>
</dbReference>
<dbReference type="Pfam" id="PF02965">
    <property type="entry name" value="Met_synt_B12"/>
    <property type="match status" value="1"/>
</dbReference>
<dbReference type="Pfam" id="PF00809">
    <property type="entry name" value="Pterin_bind"/>
    <property type="match status" value="1"/>
</dbReference>
<dbReference type="Pfam" id="PF02574">
    <property type="entry name" value="S-methyl_trans"/>
    <property type="match status" value="1"/>
</dbReference>
<dbReference type="PIRSF" id="PIRSF000381">
    <property type="entry name" value="MetH"/>
    <property type="match status" value="1"/>
</dbReference>
<dbReference type="SMART" id="SM01018">
    <property type="entry name" value="B12-binding_2"/>
    <property type="match status" value="1"/>
</dbReference>
<dbReference type="SUPFAM" id="SSF52242">
    <property type="entry name" value="Cobalamin (vitamin B12)-binding domain"/>
    <property type="match status" value="1"/>
</dbReference>
<dbReference type="SUPFAM" id="SSF51717">
    <property type="entry name" value="Dihydropteroate synthetase-like"/>
    <property type="match status" value="1"/>
</dbReference>
<dbReference type="SUPFAM" id="SSF82282">
    <property type="entry name" value="Homocysteine S-methyltransferase"/>
    <property type="match status" value="1"/>
</dbReference>
<dbReference type="SUPFAM" id="SSF56507">
    <property type="entry name" value="Methionine synthase activation domain-like"/>
    <property type="match status" value="1"/>
</dbReference>
<dbReference type="SUPFAM" id="SSF47644">
    <property type="entry name" value="Methionine synthase domain"/>
    <property type="match status" value="1"/>
</dbReference>
<dbReference type="PROSITE" id="PS50974">
    <property type="entry name" value="ADOMET_ACTIVATION"/>
    <property type="match status" value="1"/>
</dbReference>
<dbReference type="PROSITE" id="PS51332">
    <property type="entry name" value="B12_BINDING"/>
    <property type="match status" value="1"/>
</dbReference>
<dbReference type="PROSITE" id="PS51337">
    <property type="entry name" value="B12_BINDING_NTER"/>
    <property type="match status" value="1"/>
</dbReference>
<dbReference type="PROSITE" id="PS50970">
    <property type="entry name" value="HCY"/>
    <property type="match status" value="1"/>
</dbReference>
<dbReference type="PROSITE" id="PS50972">
    <property type="entry name" value="PTERIN_BINDING"/>
    <property type="match status" value="1"/>
</dbReference>
<evidence type="ECO:0000250" key="1">
    <source>
        <dbReference type="UniProtKB" id="P13009"/>
    </source>
</evidence>
<evidence type="ECO:0000250" key="2">
    <source>
        <dbReference type="UniProtKB" id="Q99707"/>
    </source>
</evidence>
<evidence type="ECO:0000250" key="3">
    <source>
        <dbReference type="UniProtKB" id="Q9Z2Q4"/>
    </source>
</evidence>
<evidence type="ECO:0000255" key="4">
    <source>
        <dbReference type="PROSITE-ProRule" id="PRU00333"/>
    </source>
</evidence>
<evidence type="ECO:0000255" key="5">
    <source>
        <dbReference type="PROSITE-ProRule" id="PRU00334"/>
    </source>
</evidence>
<evidence type="ECO:0000255" key="6">
    <source>
        <dbReference type="PROSITE-ProRule" id="PRU00346"/>
    </source>
</evidence>
<evidence type="ECO:0000255" key="7">
    <source>
        <dbReference type="PROSITE-ProRule" id="PRU00666"/>
    </source>
</evidence>
<evidence type="ECO:0000255" key="8">
    <source>
        <dbReference type="PROSITE-ProRule" id="PRU00667"/>
    </source>
</evidence>
<evidence type="ECO:0000305" key="9"/>
<proteinExistence type="evidence at transcript level"/>
<accession>Q4JIJ3</accession>